<gene>
    <name evidence="2" type="primary">atpB</name>
</gene>
<organism>
    <name type="scientific">Aethionema grandiflorum</name>
    <name type="common">Persian stone-cress</name>
    <dbReference type="NCBI Taxonomy" id="72657"/>
    <lineage>
        <taxon>Eukaryota</taxon>
        <taxon>Viridiplantae</taxon>
        <taxon>Streptophyta</taxon>
        <taxon>Embryophyta</taxon>
        <taxon>Tracheophyta</taxon>
        <taxon>Spermatophyta</taxon>
        <taxon>Magnoliopsida</taxon>
        <taxon>eudicotyledons</taxon>
        <taxon>Gunneridae</taxon>
        <taxon>Pentapetalae</taxon>
        <taxon>rosids</taxon>
        <taxon>malvids</taxon>
        <taxon>Brassicales</taxon>
        <taxon>Brassicaceae</taxon>
        <taxon>Aethionemeae</taxon>
        <taxon>Aethionema</taxon>
    </lineage>
</organism>
<proteinExistence type="inferred from homology"/>
<sequence length="490" mass="52797">MRINPTTSDPGVSILENKNLGRIAQIIGPVLDVAFPPGKMPNIYNALVVKGRDTLGEEINVTCEVQQLLGNNRVRAVAMSATEGLKRGMDVVDMGTPLSVPVGGATLGRIFNVLGEPVDNLGPVDTRTTSPIHKSAPAFIQLDTKLSIFETGIKVVDLLAPYRRGGKIGLFGGAGVGKTVLIMELINNIAKAHGGVSVFGGVGERTREGNDLYMEMKESGVINEQNLAESKVALVYGQMNEPPGARMRVGLTALTMAEYFRDVNEQDVLLFIDNIFRFVQAGSEVSALLGRMPSAVGYQPTLSTEMGSLQERITSTKKGSITSIQAVYVPADDLTDPAPATTFAHLDATTVLSRGLAAKGIYPAVDPLDSTSTMLQPRIVGEEHYETAQQVKQTLQRYKELQDIIAILGLDELSEEDRLTVARARKIERFLSQPFFVAEVFTGSPGKYVGLAETIRGFKLILSGELDSLPEQAFYLVGNIDEATAKATNL</sequence>
<comment type="function">
    <text evidence="2">Produces ATP from ADP in the presence of a proton gradient across the membrane. The catalytic sites are hosted primarily by the beta subunits.</text>
</comment>
<comment type="catalytic activity">
    <reaction evidence="2">
        <text>ATP + H2O + 4 H(+)(in) = ADP + phosphate + 5 H(+)(out)</text>
        <dbReference type="Rhea" id="RHEA:57720"/>
        <dbReference type="ChEBI" id="CHEBI:15377"/>
        <dbReference type="ChEBI" id="CHEBI:15378"/>
        <dbReference type="ChEBI" id="CHEBI:30616"/>
        <dbReference type="ChEBI" id="CHEBI:43474"/>
        <dbReference type="ChEBI" id="CHEBI:456216"/>
        <dbReference type="EC" id="7.1.2.2"/>
    </reaction>
</comment>
<comment type="subunit">
    <text evidence="2">F-type ATPases have 2 components, CF(1) - the catalytic core - and CF(0) - the membrane proton channel. CF(1) has five subunits: alpha(3), beta(3), gamma(1), delta(1), epsilon(1). CF(0) has four main subunits: a(1), b(1), b'(1) and c(9-12).</text>
</comment>
<comment type="subcellular location">
    <subcellularLocation>
        <location evidence="2">Plastid</location>
        <location evidence="2">Chloroplast thylakoid membrane</location>
        <topology evidence="2">Peripheral membrane protein</topology>
    </subcellularLocation>
</comment>
<comment type="similarity">
    <text evidence="2">Belongs to the ATPase alpha/beta chains family.</text>
</comment>
<name>ATPB_AETGR</name>
<reference key="1">
    <citation type="submission" date="2007-03" db="EMBL/GenBank/DDBJ databases">
        <title>Sequencing analysis of Aethionema grandiflorum chloroplast DNA.</title>
        <authorList>
            <person name="Hosouchi T."/>
            <person name="Tsuruoka H."/>
            <person name="Kotani H."/>
        </authorList>
    </citation>
    <scope>NUCLEOTIDE SEQUENCE [LARGE SCALE GENOMIC DNA]</scope>
</reference>
<protein>
    <recommendedName>
        <fullName evidence="2">ATP synthase subunit beta, chloroplastic</fullName>
        <ecNumber evidence="2">7.1.2.2</ecNumber>
    </recommendedName>
    <alternativeName>
        <fullName evidence="2">ATP synthase F1 sector subunit beta</fullName>
    </alternativeName>
    <alternativeName>
        <fullName evidence="2">F-ATPase subunit beta</fullName>
    </alternativeName>
</protein>
<dbReference type="EC" id="7.1.2.2" evidence="2"/>
<dbReference type="EMBL" id="AP009367">
    <property type="protein sequence ID" value="BAF49861.1"/>
    <property type="molecule type" value="Genomic_DNA"/>
</dbReference>
<dbReference type="RefSeq" id="YP_001123037.1">
    <property type="nucleotide sequence ID" value="NC_009266.1"/>
</dbReference>
<dbReference type="SMR" id="A4QJK6"/>
<dbReference type="GeneID" id="4962331"/>
<dbReference type="GO" id="GO:0009535">
    <property type="term" value="C:chloroplast thylakoid membrane"/>
    <property type="evidence" value="ECO:0007669"/>
    <property type="project" value="UniProtKB-SubCell"/>
</dbReference>
<dbReference type="GO" id="GO:0005739">
    <property type="term" value="C:mitochondrion"/>
    <property type="evidence" value="ECO:0007669"/>
    <property type="project" value="GOC"/>
</dbReference>
<dbReference type="GO" id="GO:0045259">
    <property type="term" value="C:proton-transporting ATP synthase complex"/>
    <property type="evidence" value="ECO:0007669"/>
    <property type="project" value="UniProtKB-KW"/>
</dbReference>
<dbReference type="GO" id="GO:0005524">
    <property type="term" value="F:ATP binding"/>
    <property type="evidence" value="ECO:0007669"/>
    <property type="project" value="UniProtKB-UniRule"/>
</dbReference>
<dbReference type="GO" id="GO:0016887">
    <property type="term" value="F:ATP hydrolysis activity"/>
    <property type="evidence" value="ECO:0007669"/>
    <property type="project" value="InterPro"/>
</dbReference>
<dbReference type="GO" id="GO:0046933">
    <property type="term" value="F:proton-transporting ATP synthase activity, rotational mechanism"/>
    <property type="evidence" value="ECO:0007669"/>
    <property type="project" value="UniProtKB-UniRule"/>
</dbReference>
<dbReference type="GO" id="GO:0042776">
    <property type="term" value="P:proton motive force-driven mitochondrial ATP synthesis"/>
    <property type="evidence" value="ECO:0007669"/>
    <property type="project" value="TreeGrafter"/>
</dbReference>
<dbReference type="CDD" id="cd18110">
    <property type="entry name" value="ATP-synt_F1_beta_C"/>
    <property type="match status" value="1"/>
</dbReference>
<dbReference type="CDD" id="cd18115">
    <property type="entry name" value="ATP-synt_F1_beta_N"/>
    <property type="match status" value="1"/>
</dbReference>
<dbReference type="CDD" id="cd01133">
    <property type="entry name" value="F1-ATPase_beta_CD"/>
    <property type="match status" value="1"/>
</dbReference>
<dbReference type="FunFam" id="1.10.1140.10:FF:000001">
    <property type="entry name" value="ATP synthase subunit beta"/>
    <property type="match status" value="1"/>
</dbReference>
<dbReference type="FunFam" id="3.40.50.12240:FF:000006">
    <property type="entry name" value="ATP synthase subunit beta"/>
    <property type="match status" value="1"/>
</dbReference>
<dbReference type="FunFam" id="3.40.50.300:FF:000026">
    <property type="entry name" value="ATP synthase subunit beta"/>
    <property type="match status" value="1"/>
</dbReference>
<dbReference type="FunFam" id="2.40.10.170:FF:000002">
    <property type="entry name" value="ATP synthase subunit beta, chloroplastic"/>
    <property type="match status" value="1"/>
</dbReference>
<dbReference type="Gene3D" id="2.40.10.170">
    <property type="match status" value="1"/>
</dbReference>
<dbReference type="Gene3D" id="1.10.1140.10">
    <property type="entry name" value="Bovine Mitochondrial F1-atpase, Atp Synthase Beta Chain, Chain D, domain 3"/>
    <property type="match status" value="1"/>
</dbReference>
<dbReference type="Gene3D" id="3.40.50.300">
    <property type="entry name" value="P-loop containing nucleotide triphosphate hydrolases"/>
    <property type="match status" value="1"/>
</dbReference>
<dbReference type="HAMAP" id="MF_01347">
    <property type="entry name" value="ATP_synth_beta_bact"/>
    <property type="match status" value="1"/>
</dbReference>
<dbReference type="InterPro" id="IPR003593">
    <property type="entry name" value="AAA+_ATPase"/>
</dbReference>
<dbReference type="InterPro" id="IPR055190">
    <property type="entry name" value="ATP-synt_VA_C"/>
</dbReference>
<dbReference type="InterPro" id="IPR005722">
    <property type="entry name" value="ATP_synth_F1_bsu"/>
</dbReference>
<dbReference type="InterPro" id="IPR020003">
    <property type="entry name" value="ATPase_a/bsu_AS"/>
</dbReference>
<dbReference type="InterPro" id="IPR050053">
    <property type="entry name" value="ATPase_alpha/beta_chains"/>
</dbReference>
<dbReference type="InterPro" id="IPR004100">
    <property type="entry name" value="ATPase_F1/V1/A1_a/bsu_N"/>
</dbReference>
<dbReference type="InterPro" id="IPR036121">
    <property type="entry name" value="ATPase_F1/V1/A1_a/bsu_N_sf"/>
</dbReference>
<dbReference type="InterPro" id="IPR000194">
    <property type="entry name" value="ATPase_F1/V1/A1_a/bsu_nucl-bd"/>
</dbReference>
<dbReference type="InterPro" id="IPR024034">
    <property type="entry name" value="ATPase_F1/V1_b/a_C"/>
</dbReference>
<dbReference type="InterPro" id="IPR027417">
    <property type="entry name" value="P-loop_NTPase"/>
</dbReference>
<dbReference type="NCBIfam" id="TIGR01039">
    <property type="entry name" value="atpD"/>
    <property type="match status" value="1"/>
</dbReference>
<dbReference type="PANTHER" id="PTHR15184">
    <property type="entry name" value="ATP SYNTHASE"/>
    <property type="match status" value="1"/>
</dbReference>
<dbReference type="PANTHER" id="PTHR15184:SF71">
    <property type="entry name" value="ATP SYNTHASE SUBUNIT BETA, MITOCHONDRIAL"/>
    <property type="match status" value="1"/>
</dbReference>
<dbReference type="Pfam" id="PF00006">
    <property type="entry name" value="ATP-synt_ab"/>
    <property type="match status" value="1"/>
</dbReference>
<dbReference type="Pfam" id="PF02874">
    <property type="entry name" value="ATP-synt_ab_N"/>
    <property type="match status" value="1"/>
</dbReference>
<dbReference type="Pfam" id="PF22919">
    <property type="entry name" value="ATP-synt_VA_C"/>
    <property type="match status" value="1"/>
</dbReference>
<dbReference type="SMART" id="SM00382">
    <property type="entry name" value="AAA"/>
    <property type="match status" value="1"/>
</dbReference>
<dbReference type="SUPFAM" id="SSF47917">
    <property type="entry name" value="C-terminal domain of alpha and beta subunits of F1 ATP synthase"/>
    <property type="match status" value="1"/>
</dbReference>
<dbReference type="SUPFAM" id="SSF50615">
    <property type="entry name" value="N-terminal domain of alpha and beta subunits of F1 ATP synthase"/>
    <property type="match status" value="1"/>
</dbReference>
<dbReference type="SUPFAM" id="SSF52540">
    <property type="entry name" value="P-loop containing nucleoside triphosphate hydrolases"/>
    <property type="match status" value="1"/>
</dbReference>
<dbReference type="PROSITE" id="PS00152">
    <property type="entry name" value="ATPASE_ALPHA_BETA"/>
    <property type="match status" value="1"/>
</dbReference>
<keyword id="KW-0066">ATP synthesis</keyword>
<keyword id="KW-0067">ATP-binding</keyword>
<keyword id="KW-0139">CF(1)</keyword>
<keyword id="KW-0150">Chloroplast</keyword>
<keyword id="KW-0375">Hydrogen ion transport</keyword>
<keyword id="KW-0406">Ion transport</keyword>
<keyword id="KW-0472">Membrane</keyword>
<keyword id="KW-0547">Nucleotide-binding</keyword>
<keyword id="KW-0597">Phosphoprotein</keyword>
<keyword id="KW-0934">Plastid</keyword>
<keyword id="KW-0793">Thylakoid</keyword>
<keyword id="KW-1278">Translocase</keyword>
<keyword id="KW-0813">Transport</keyword>
<feature type="chain" id="PRO_0000339603" description="ATP synthase subunit beta, chloroplastic">
    <location>
        <begin position="1"/>
        <end position="490"/>
    </location>
</feature>
<feature type="binding site" evidence="2">
    <location>
        <begin position="172"/>
        <end position="179"/>
    </location>
    <ligand>
        <name>ATP</name>
        <dbReference type="ChEBI" id="CHEBI:30616"/>
    </ligand>
</feature>
<feature type="modified residue" description="Phosphothreonine" evidence="1">
    <location>
        <position position="6"/>
    </location>
</feature>
<feature type="modified residue" description="Phosphoserine" evidence="1">
    <location>
        <position position="13"/>
    </location>
</feature>
<accession>A4QJK6</accession>
<geneLocation type="chloroplast"/>
<evidence type="ECO:0000250" key="1">
    <source>
        <dbReference type="UniProtKB" id="P19366"/>
    </source>
</evidence>
<evidence type="ECO:0000255" key="2">
    <source>
        <dbReference type="HAMAP-Rule" id="MF_01347"/>
    </source>
</evidence>